<dbReference type="EMBL" id="AF157026">
    <property type="protein sequence ID" value="AAF76291.1"/>
    <property type="molecule type" value="mRNA"/>
</dbReference>
<dbReference type="EMBL" id="BC070898">
    <property type="protein sequence ID" value="AAH70898.1"/>
    <property type="molecule type" value="mRNA"/>
</dbReference>
<dbReference type="EMBL" id="AF247725">
    <property type="protein sequence ID" value="AAL55704.1"/>
    <property type="molecule type" value="mRNA"/>
</dbReference>
<dbReference type="RefSeq" id="NP_445832.1">
    <property type="nucleotide sequence ID" value="NM_053380.2"/>
</dbReference>
<dbReference type="RefSeq" id="XP_063129751.1">
    <property type="nucleotide sequence ID" value="XM_063273681.1"/>
</dbReference>
<dbReference type="FunCoup" id="Q9JJ09">
    <property type="interactions" value="40"/>
</dbReference>
<dbReference type="STRING" id="10116.ENSRNOP00000050889"/>
<dbReference type="BindingDB" id="Q9JJ09"/>
<dbReference type="ChEMBL" id="CHEMBL5169199"/>
<dbReference type="GlyCosmos" id="Q9JJ09">
    <property type="glycosylation" value="5 sites, No reported glycans"/>
</dbReference>
<dbReference type="GlyGen" id="Q9JJ09">
    <property type="glycosylation" value="5 sites"/>
</dbReference>
<dbReference type="iPTMnet" id="Q9JJ09"/>
<dbReference type="PhosphoSitePlus" id="Q9JJ09"/>
<dbReference type="PaxDb" id="10116-ENSRNOP00000050889"/>
<dbReference type="GeneID" id="84395"/>
<dbReference type="KEGG" id="rno:84395"/>
<dbReference type="AGR" id="RGD:620889"/>
<dbReference type="CTD" id="10568"/>
<dbReference type="RGD" id="620889">
    <property type="gene designation" value="Slc34a2"/>
</dbReference>
<dbReference type="eggNOG" id="ENOG502QQ3I">
    <property type="taxonomic scope" value="Eukaryota"/>
</dbReference>
<dbReference type="HOGENOM" id="CLU_025063_0_0_1"/>
<dbReference type="InParanoid" id="Q9JJ09"/>
<dbReference type="OrthoDB" id="77879at9989"/>
<dbReference type="PhylomeDB" id="Q9JJ09"/>
<dbReference type="TreeFam" id="TF313981"/>
<dbReference type="Reactome" id="R-RNO-427589">
    <property type="pathway name" value="Type II Na+/Pi cotransporters"/>
</dbReference>
<dbReference type="Reactome" id="R-RNO-5683826">
    <property type="pathway name" value="Surfactant metabolism"/>
</dbReference>
<dbReference type="PRO" id="PR:Q9JJ09"/>
<dbReference type="Proteomes" id="UP000002494">
    <property type="component" value="Unplaced"/>
</dbReference>
<dbReference type="GO" id="GO:0016324">
    <property type="term" value="C:apical plasma membrane"/>
    <property type="evidence" value="ECO:0000314"/>
    <property type="project" value="UniProtKB"/>
</dbReference>
<dbReference type="GO" id="GO:0005903">
    <property type="term" value="C:brush border"/>
    <property type="evidence" value="ECO:0000266"/>
    <property type="project" value="RGD"/>
</dbReference>
<dbReference type="GO" id="GO:0031526">
    <property type="term" value="C:brush border membrane"/>
    <property type="evidence" value="ECO:0000314"/>
    <property type="project" value="RGD"/>
</dbReference>
<dbReference type="GO" id="GO:0016020">
    <property type="term" value="C:membrane"/>
    <property type="evidence" value="ECO:0000266"/>
    <property type="project" value="RGD"/>
</dbReference>
<dbReference type="GO" id="GO:0031528">
    <property type="term" value="C:microvillus membrane"/>
    <property type="evidence" value="ECO:0000314"/>
    <property type="project" value="RGD"/>
</dbReference>
<dbReference type="GO" id="GO:0031982">
    <property type="term" value="C:vesicle"/>
    <property type="evidence" value="ECO:0000318"/>
    <property type="project" value="GO_Central"/>
</dbReference>
<dbReference type="GO" id="GO:0042301">
    <property type="term" value="F:phosphate ion binding"/>
    <property type="evidence" value="ECO:0000266"/>
    <property type="project" value="RGD"/>
</dbReference>
<dbReference type="GO" id="GO:0019904">
    <property type="term" value="F:protein domain specific binding"/>
    <property type="evidence" value="ECO:0000353"/>
    <property type="project" value="RGD"/>
</dbReference>
<dbReference type="GO" id="GO:0031402">
    <property type="term" value="F:sodium ion binding"/>
    <property type="evidence" value="ECO:0000266"/>
    <property type="project" value="RGD"/>
</dbReference>
<dbReference type="GO" id="GO:0005436">
    <property type="term" value="F:sodium:phosphate symporter activity"/>
    <property type="evidence" value="ECO:0000314"/>
    <property type="project" value="UniProtKB"/>
</dbReference>
<dbReference type="GO" id="GO:0001701">
    <property type="term" value="P:in utero embryonic development"/>
    <property type="evidence" value="ECO:0000266"/>
    <property type="project" value="RGD"/>
</dbReference>
<dbReference type="GO" id="GO:0030643">
    <property type="term" value="P:intracellular phosphate ion homeostasis"/>
    <property type="evidence" value="ECO:0000266"/>
    <property type="project" value="RGD"/>
</dbReference>
<dbReference type="GO" id="GO:0006817">
    <property type="term" value="P:phosphate ion transport"/>
    <property type="evidence" value="ECO:0000266"/>
    <property type="project" value="RGD"/>
</dbReference>
<dbReference type="GO" id="GO:0032355">
    <property type="term" value="P:response to estradiol"/>
    <property type="evidence" value="ECO:0000270"/>
    <property type="project" value="RGD"/>
</dbReference>
<dbReference type="GO" id="GO:0043627">
    <property type="term" value="P:response to estrogen"/>
    <property type="evidence" value="ECO:0000266"/>
    <property type="project" value="RGD"/>
</dbReference>
<dbReference type="GO" id="GO:0009750">
    <property type="term" value="P:response to fructose"/>
    <property type="evidence" value="ECO:0000270"/>
    <property type="project" value="RGD"/>
</dbReference>
<dbReference type="GO" id="GO:0044341">
    <property type="term" value="P:sodium-dependent phosphate transport"/>
    <property type="evidence" value="ECO:0000315"/>
    <property type="project" value="RGD"/>
</dbReference>
<dbReference type="InterPro" id="IPR003841">
    <property type="entry name" value="Na/Pi_transpt"/>
</dbReference>
<dbReference type="NCBIfam" id="TIGR01013">
    <property type="entry name" value="2a58"/>
    <property type="match status" value="1"/>
</dbReference>
<dbReference type="NCBIfam" id="NF037997">
    <property type="entry name" value="Na_Pi_symport"/>
    <property type="match status" value="1"/>
</dbReference>
<dbReference type="PANTHER" id="PTHR10010:SF23">
    <property type="entry name" value="SODIUM-DEPENDENT PHOSPHATE TRANSPORT PROTEIN 2B"/>
    <property type="match status" value="1"/>
</dbReference>
<dbReference type="PANTHER" id="PTHR10010">
    <property type="entry name" value="SOLUTE CARRIER FAMILY 34 SODIUM PHOSPHATE , MEMBER 2-RELATED"/>
    <property type="match status" value="1"/>
</dbReference>
<dbReference type="Pfam" id="PF02690">
    <property type="entry name" value="Na_Pi_cotrans"/>
    <property type="match status" value="2"/>
</dbReference>
<feature type="chain" id="PRO_0000068616" description="Sodium-dependent phosphate transport protein 2B">
    <location>
        <begin position="1"/>
        <end position="695"/>
    </location>
</feature>
<feature type="topological domain" description="Cytoplasmic" evidence="3">
    <location>
        <begin position="1"/>
        <end position="90"/>
    </location>
</feature>
<feature type="transmembrane region" description="Helical; Name=M1" evidence="3">
    <location>
        <begin position="91"/>
        <end position="111"/>
    </location>
</feature>
<feature type="topological domain" description="Extracellular" evidence="3">
    <location>
        <begin position="112"/>
        <end position="136"/>
    </location>
</feature>
<feature type="transmembrane region" description="Helical; Name=M2" evidence="3">
    <location>
        <begin position="137"/>
        <end position="157"/>
    </location>
</feature>
<feature type="topological domain" description="Cytoplasmic" evidence="3">
    <location>
        <begin position="158"/>
        <end position="213"/>
    </location>
</feature>
<feature type="transmembrane region" description="Helical; Name=M3" evidence="3">
    <location>
        <begin position="214"/>
        <end position="234"/>
    </location>
</feature>
<feature type="topological domain" description="Extracellular" evidence="3">
    <location>
        <begin position="235"/>
        <end position="363"/>
    </location>
</feature>
<feature type="transmembrane region" description="Helical; Name=M4" evidence="3">
    <location>
        <begin position="364"/>
        <end position="384"/>
    </location>
</feature>
<feature type="topological domain" description="Cytoplasmic" evidence="3">
    <location>
        <begin position="385"/>
        <end position="408"/>
    </location>
</feature>
<feature type="transmembrane region" description="Helical; Name=M5" evidence="3">
    <location>
        <begin position="409"/>
        <end position="429"/>
    </location>
</feature>
<feature type="topological domain" description="Extracellular" evidence="3">
    <location>
        <begin position="430"/>
        <end position="486"/>
    </location>
</feature>
<feature type="transmembrane region" description="Helical; Name=M6" evidence="3">
    <location>
        <begin position="487"/>
        <end position="507"/>
    </location>
</feature>
<feature type="topological domain" description="Cytoplasmic" evidence="3">
    <location>
        <begin position="508"/>
        <end position="526"/>
    </location>
</feature>
<feature type="transmembrane region" description="Helical; Name=M7" evidence="3">
    <location>
        <begin position="527"/>
        <end position="547"/>
    </location>
</feature>
<feature type="topological domain" description="Extracellular" evidence="3">
    <location>
        <begin position="548"/>
        <end position="551"/>
    </location>
</feature>
<feature type="transmembrane region" description="Helical; Name=M8" evidence="3">
    <location>
        <begin position="552"/>
        <end position="572"/>
    </location>
</feature>
<feature type="topological domain" description="Cytoplasmic" evidence="3">
    <location>
        <begin position="573"/>
        <end position="695"/>
    </location>
</feature>
<feature type="region of interest" description="Disordered" evidence="4">
    <location>
        <begin position="1"/>
        <end position="44"/>
    </location>
</feature>
<feature type="glycosylation site" description="N-linked (GlcNAc...) asparagine" evidence="3">
    <location>
        <position position="295"/>
    </location>
</feature>
<feature type="glycosylation site" description="N-linked (GlcNAc...) asparagine" evidence="3">
    <location>
        <position position="313"/>
    </location>
</feature>
<feature type="glycosylation site" description="N-linked (GlcNAc...) asparagine" evidence="3">
    <location>
        <position position="321"/>
    </location>
</feature>
<feature type="glycosylation site" description="N-linked (GlcNAc...) asparagine" evidence="3">
    <location>
        <position position="340"/>
    </location>
</feature>
<feature type="glycosylation site" description="N-linked (GlcNAc...) asparagine" evidence="3">
    <location>
        <position position="356"/>
    </location>
</feature>
<feature type="disulfide bond" evidence="1">
    <location>
        <begin position="303"/>
        <end position="350"/>
    </location>
</feature>
<sequence>MAPWPELENAHPNPNKFIEGASGPQSSIPDKDKGTSKTNDSGTPVAKIELLPSYSALVLIEEPPEGNDPWDLPELQDNGIKWSERDSKGKILCIFQGIGKFILLLGFLYLFVCSLDVLSSAFQLVGGKMAGQFFSNNSIMSNPVAGLVIGVLVTVMVQSSSTSSSIIVSMVASSLLSVRAAIPIIMGANIGTSITNTIVALMQAGDRNEFRRAFAGATVHDFFNWLSVLVLLPLEAATHYLEKLTNLVLETFSFQNGEDAPDILKVITDPFTKLIIQLDKKVIQQIAMGDSEAQNKSLIKIWCKTISNVIEENVTVPSPDNCTSPSYCWTDGIQTWTIQNVTEKENIAKCQHIFVNFSLPDLAVGIILLTVSLLILCGCLIMIVKLLGSVLRGQVATVIKKTLNTDFPFPFAWLTGYLAILVGAGMTFIVQSSSVFTSAMTPLIGIGVISIERAYPLTLGSNIGTTTTAILAALASPGNTLRSSLQIALCHFFFNISGILLWYPIPFTRLPIRLAKGLGNISAKYRWFAVFYLIFFFLLTPLTVFGLSLAGWPVLVGVGVPIILLILLVLCLRMLQARCPRILPLKLRDWNFLPLWMHSLKPWDNIISLATSCFQRRCCCCCRVCCRVCCMVCGCKCCRCSKCCKNLEEEEKEQDVPVKASGGFDNTAMSKECQDEGKGQVEVLGMKALSNTTVF</sequence>
<keyword id="KW-1003">Cell membrane</keyword>
<keyword id="KW-1015">Disulfide bond</keyword>
<keyword id="KW-0325">Glycoprotein</keyword>
<keyword id="KW-0406">Ion transport</keyword>
<keyword id="KW-0472">Membrane</keyword>
<keyword id="KW-1185">Reference proteome</keyword>
<keyword id="KW-0915">Sodium</keyword>
<keyword id="KW-0739">Sodium transport</keyword>
<keyword id="KW-0769">Symport</keyword>
<keyword id="KW-0812">Transmembrane</keyword>
<keyword id="KW-1133">Transmembrane helix</keyword>
<keyword id="KW-0813">Transport</keyword>
<accession>Q9JJ09</accession>
<accession>Q8VI55</accession>
<organism>
    <name type="scientific">Rattus norvegicus</name>
    <name type="common">Rat</name>
    <dbReference type="NCBI Taxonomy" id="10116"/>
    <lineage>
        <taxon>Eukaryota</taxon>
        <taxon>Metazoa</taxon>
        <taxon>Chordata</taxon>
        <taxon>Craniata</taxon>
        <taxon>Vertebrata</taxon>
        <taxon>Euteleostomi</taxon>
        <taxon>Mammalia</taxon>
        <taxon>Eutheria</taxon>
        <taxon>Euarchontoglires</taxon>
        <taxon>Glires</taxon>
        <taxon>Rodentia</taxon>
        <taxon>Myomorpha</taxon>
        <taxon>Muroidea</taxon>
        <taxon>Muridae</taxon>
        <taxon>Murinae</taxon>
        <taxon>Rattus</taxon>
    </lineage>
</organism>
<comment type="function">
    <text evidence="6">Involved in actively transporting phosphate into cells via Na(+) cotransport.</text>
</comment>
<comment type="catalytic activity">
    <reaction evidence="6">
        <text>3 Na(+)(out) + phosphate(out) = 3 Na(+)(in) + phosphate(in)</text>
        <dbReference type="Rhea" id="RHEA:71255"/>
        <dbReference type="ChEBI" id="CHEBI:29101"/>
        <dbReference type="ChEBI" id="CHEBI:43474"/>
    </reaction>
    <physiologicalReaction direction="left-to-right" evidence="8">
        <dbReference type="Rhea" id="RHEA:71256"/>
    </physiologicalReaction>
</comment>
<comment type="subcellular location">
    <subcellularLocation>
        <location evidence="6">Apical cell membrane</location>
        <topology evidence="3">Multi-pass membrane protein</topology>
    </subcellularLocation>
    <text evidence="2">Localized at the brush border membranes of enterocytes.</text>
</comment>
<comment type="tissue specificity">
    <text evidence="5">Highly expressed in the lung, in type II alveolar cells. Moderately expressed in kidney followed by small intestine.</text>
</comment>
<comment type="developmental stage">
    <text evidence="5">Appears on embryonic day 16.5 and is expressed thereafter.</text>
</comment>
<comment type="induction">
    <text evidence="6">Up-regulated by estrogen.</text>
</comment>
<comment type="similarity">
    <text evidence="7">Belongs to the SLC34A transporter family.</text>
</comment>
<evidence type="ECO:0000250" key="1">
    <source>
        <dbReference type="UniProtKB" id="Q06496"/>
    </source>
</evidence>
<evidence type="ECO:0000250" key="2">
    <source>
        <dbReference type="UniProtKB" id="Q9DBP0"/>
    </source>
</evidence>
<evidence type="ECO:0000255" key="3"/>
<evidence type="ECO:0000256" key="4">
    <source>
        <dbReference type="SAM" id="MobiDB-lite"/>
    </source>
</evidence>
<evidence type="ECO:0000269" key="5">
    <source>
    </source>
</evidence>
<evidence type="ECO:0000269" key="6">
    <source>
    </source>
</evidence>
<evidence type="ECO:0000305" key="7"/>
<evidence type="ECO:0000305" key="8">
    <source>
    </source>
</evidence>
<reference key="1">
    <citation type="journal article" date="2000" name="Am. J. Pathol.">
        <title>Isolation and localization of type IIb Na/Pi cotransporter in the developing rat lung.</title>
        <authorList>
            <person name="Hashimoto M."/>
            <person name="Wang D.-Y."/>
            <person name="Kamo T."/>
            <person name="Zhu Y."/>
            <person name="Tsujiuchi T."/>
            <person name="Konishi Y."/>
            <person name="Tanaka M."/>
            <person name="Sugimura H."/>
        </authorList>
    </citation>
    <scope>NUCLEOTIDE SEQUENCE [MRNA]</scope>
    <scope>TISSUE SPECIFICITY</scope>
    <scope>DEVELOPMENTAL STAGE</scope>
    <source>
        <strain>Wistar</strain>
        <tissue>Lung</tissue>
    </source>
</reference>
<reference key="2">
    <citation type="journal article" date="2004" name="Genome Res.">
        <title>The status, quality, and expansion of the NIH full-length cDNA project: the Mammalian Gene Collection (MGC).</title>
        <authorList>
            <consortium name="The MGC Project Team"/>
        </authorList>
    </citation>
    <scope>NUCLEOTIDE SEQUENCE [LARGE SCALE MRNA]</scope>
    <source>
        <strain>Brown Norway</strain>
        <tissue>Lung</tissue>
    </source>
</reference>
<reference key="3">
    <citation type="submission" date="2000-03" db="EMBL/GenBank/DDBJ databases">
        <title>Molecular cloning and functional characterization of an intestinal sodium-phosphate transporter gene promoter and its gene structure.</title>
        <authorList>
            <person name="Xu H."/>
            <person name="Bai L."/>
            <person name="Collins J.F."/>
            <person name="Ghishan F.K."/>
        </authorList>
    </citation>
    <scope>NUCLEOTIDE SEQUENCE [MRNA] OF 215-466</scope>
    <source>
        <tissue>Intestine</tissue>
    </source>
</reference>
<reference key="4">
    <citation type="journal article" date="2003" name="Am. J. Physiol.">
        <title>Regulation of intestinal NaPi-IIb cotransporter gene expression by estrogen.</title>
        <authorList>
            <person name="Xu H."/>
            <person name="Uno J.K."/>
            <person name="Inouye M."/>
            <person name="Xu L."/>
            <person name="Drees J.B."/>
            <person name="Collins J.F."/>
            <person name="Ghishan F.K."/>
        </authorList>
    </citation>
    <scope>FUNCTION</scope>
    <scope>TRANSPORTER ACTIVITY</scope>
    <scope>SUBCELLULAR LOCATION</scope>
    <scope>INDUCTION</scope>
    <source>
        <strain>Sprague-Dawley</strain>
    </source>
</reference>
<reference key="5">
    <citation type="journal article" date="2012" name="Nat. Commun.">
        <title>Quantitative maps of protein phosphorylation sites across 14 different rat organs and tissues.</title>
        <authorList>
            <person name="Lundby A."/>
            <person name="Secher A."/>
            <person name="Lage K."/>
            <person name="Nordsborg N.B."/>
            <person name="Dmytriyev A."/>
            <person name="Lundby C."/>
            <person name="Olsen J.V."/>
        </authorList>
    </citation>
    <scope>IDENTIFICATION BY MASS SPECTROMETRY [LARGE SCALE ANALYSIS]</scope>
</reference>
<proteinExistence type="evidence at protein level"/>
<protein>
    <recommendedName>
        <fullName>Sodium-dependent phosphate transport protein 2B</fullName>
        <shortName>Sodium-phosphate transport protein 2B</shortName>
    </recommendedName>
    <alternativeName>
        <fullName>Na(+)-dependent phosphate cotransporter 2B</fullName>
    </alternativeName>
    <alternativeName>
        <fullName>Sodium/phosphate cotransporter 2B</fullName>
        <shortName>Na(+)/Pi cotransporter 2B</shortName>
        <shortName>NaPi-2b</shortName>
    </alternativeName>
    <alternativeName>
        <fullName>Solute carrier family 34 member 2</fullName>
        <shortName>rNaPi IIb</shortName>
    </alternativeName>
</protein>
<gene>
    <name type="primary">Slc34a2</name>
</gene>
<name>NPT2B_RAT</name>